<accession>Q1D6E1</accession>
<feature type="chain" id="PRO_1000049019" description="Large ribosomal subunit protein bL20">
    <location>
        <begin position="1"/>
        <end position="115"/>
    </location>
</feature>
<dbReference type="EMBL" id="CP000113">
    <property type="protein sequence ID" value="ABF89728.1"/>
    <property type="molecule type" value="Genomic_DNA"/>
</dbReference>
<dbReference type="RefSeq" id="WP_011553618.1">
    <property type="nucleotide sequence ID" value="NC_008095.1"/>
</dbReference>
<dbReference type="SMR" id="Q1D6E1"/>
<dbReference type="STRING" id="246197.MXAN_3593"/>
<dbReference type="EnsemblBacteria" id="ABF89728">
    <property type="protein sequence ID" value="ABF89728"/>
    <property type="gene ID" value="MXAN_3593"/>
</dbReference>
<dbReference type="GeneID" id="41360939"/>
<dbReference type="KEGG" id="mxa:MXAN_3593"/>
<dbReference type="eggNOG" id="COG0292">
    <property type="taxonomic scope" value="Bacteria"/>
</dbReference>
<dbReference type="HOGENOM" id="CLU_123265_0_1_7"/>
<dbReference type="OrthoDB" id="9808966at2"/>
<dbReference type="Proteomes" id="UP000002402">
    <property type="component" value="Chromosome"/>
</dbReference>
<dbReference type="GO" id="GO:1990904">
    <property type="term" value="C:ribonucleoprotein complex"/>
    <property type="evidence" value="ECO:0007669"/>
    <property type="project" value="UniProtKB-KW"/>
</dbReference>
<dbReference type="GO" id="GO:0005840">
    <property type="term" value="C:ribosome"/>
    <property type="evidence" value="ECO:0007669"/>
    <property type="project" value="UniProtKB-KW"/>
</dbReference>
<dbReference type="GO" id="GO:0019843">
    <property type="term" value="F:rRNA binding"/>
    <property type="evidence" value="ECO:0007669"/>
    <property type="project" value="UniProtKB-UniRule"/>
</dbReference>
<dbReference type="GO" id="GO:0003735">
    <property type="term" value="F:structural constituent of ribosome"/>
    <property type="evidence" value="ECO:0007669"/>
    <property type="project" value="InterPro"/>
</dbReference>
<dbReference type="GO" id="GO:0000027">
    <property type="term" value="P:ribosomal large subunit assembly"/>
    <property type="evidence" value="ECO:0007669"/>
    <property type="project" value="UniProtKB-UniRule"/>
</dbReference>
<dbReference type="GO" id="GO:0006412">
    <property type="term" value="P:translation"/>
    <property type="evidence" value="ECO:0007669"/>
    <property type="project" value="InterPro"/>
</dbReference>
<dbReference type="CDD" id="cd07026">
    <property type="entry name" value="Ribosomal_L20"/>
    <property type="match status" value="1"/>
</dbReference>
<dbReference type="FunFam" id="1.10.1900.20:FF:000001">
    <property type="entry name" value="50S ribosomal protein L20"/>
    <property type="match status" value="1"/>
</dbReference>
<dbReference type="Gene3D" id="6.10.160.10">
    <property type="match status" value="1"/>
</dbReference>
<dbReference type="Gene3D" id="1.10.1900.20">
    <property type="entry name" value="Ribosomal protein L20"/>
    <property type="match status" value="1"/>
</dbReference>
<dbReference type="HAMAP" id="MF_00382">
    <property type="entry name" value="Ribosomal_bL20"/>
    <property type="match status" value="1"/>
</dbReference>
<dbReference type="InterPro" id="IPR005813">
    <property type="entry name" value="Ribosomal_bL20"/>
</dbReference>
<dbReference type="InterPro" id="IPR049946">
    <property type="entry name" value="RIBOSOMAL_L20_CS"/>
</dbReference>
<dbReference type="InterPro" id="IPR035566">
    <property type="entry name" value="Ribosomal_protein_bL20_C"/>
</dbReference>
<dbReference type="NCBIfam" id="TIGR01032">
    <property type="entry name" value="rplT_bact"/>
    <property type="match status" value="1"/>
</dbReference>
<dbReference type="PANTHER" id="PTHR10986">
    <property type="entry name" value="39S RIBOSOMAL PROTEIN L20"/>
    <property type="match status" value="1"/>
</dbReference>
<dbReference type="Pfam" id="PF00453">
    <property type="entry name" value="Ribosomal_L20"/>
    <property type="match status" value="1"/>
</dbReference>
<dbReference type="PRINTS" id="PR00062">
    <property type="entry name" value="RIBOSOMALL20"/>
</dbReference>
<dbReference type="SUPFAM" id="SSF74731">
    <property type="entry name" value="Ribosomal protein L20"/>
    <property type="match status" value="1"/>
</dbReference>
<dbReference type="PROSITE" id="PS00937">
    <property type="entry name" value="RIBOSOMAL_L20"/>
    <property type="match status" value="1"/>
</dbReference>
<keyword id="KW-1185">Reference proteome</keyword>
<keyword id="KW-0687">Ribonucleoprotein</keyword>
<keyword id="KW-0689">Ribosomal protein</keyword>
<keyword id="KW-0694">RNA-binding</keyword>
<keyword id="KW-0699">rRNA-binding</keyword>
<comment type="function">
    <text evidence="1">Binds directly to 23S ribosomal RNA and is necessary for the in vitro assembly process of the 50S ribosomal subunit. It is not involved in the protein synthesizing functions of that subunit.</text>
</comment>
<comment type="similarity">
    <text evidence="1">Belongs to the bacterial ribosomal protein bL20 family.</text>
</comment>
<reference key="1">
    <citation type="journal article" date="2006" name="Proc. Natl. Acad. Sci. U.S.A.">
        <title>Evolution of sensory complexity recorded in a myxobacterial genome.</title>
        <authorList>
            <person name="Goldman B.S."/>
            <person name="Nierman W.C."/>
            <person name="Kaiser D."/>
            <person name="Slater S.C."/>
            <person name="Durkin A.S."/>
            <person name="Eisen J.A."/>
            <person name="Ronning C.M."/>
            <person name="Barbazuk W.B."/>
            <person name="Blanchard M."/>
            <person name="Field C."/>
            <person name="Halling C."/>
            <person name="Hinkle G."/>
            <person name="Iartchuk O."/>
            <person name="Kim H.S."/>
            <person name="Mackenzie C."/>
            <person name="Madupu R."/>
            <person name="Miller N."/>
            <person name="Shvartsbeyn A."/>
            <person name="Sullivan S.A."/>
            <person name="Vaudin M."/>
            <person name="Wiegand R."/>
            <person name="Kaplan H.B."/>
        </authorList>
    </citation>
    <scope>NUCLEOTIDE SEQUENCE [LARGE SCALE GENOMIC DNA]</scope>
    <source>
        <strain>DK1622</strain>
    </source>
</reference>
<sequence length="115" mass="13044">MRVKKGVKARRRRNRILKLAKGYRGRRKNCYKRANEAVERALDYASRDRMQRKRDFRRLWIVRINAAARTVGLSYSKLIAGLAKAKIGLDRKVLSDMAIADPSGFAAVANIAKAA</sequence>
<organism>
    <name type="scientific">Myxococcus xanthus (strain DK1622)</name>
    <dbReference type="NCBI Taxonomy" id="246197"/>
    <lineage>
        <taxon>Bacteria</taxon>
        <taxon>Pseudomonadati</taxon>
        <taxon>Myxococcota</taxon>
        <taxon>Myxococcia</taxon>
        <taxon>Myxococcales</taxon>
        <taxon>Cystobacterineae</taxon>
        <taxon>Myxococcaceae</taxon>
        <taxon>Myxococcus</taxon>
    </lineage>
</organism>
<protein>
    <recommendedName>
        <fullName evidence="1">Large ribosomal subunit protein bL20</fullName>
    </recommendedName>
    <alternativeName>
        <fullName evidence="2">50S ribosomal protein L20</fullName>
    </alternativeName>
</protein>
<evidence type="ECO:0000255" key="1">
    <source>
        <dbReference type="HAMAP-Rule" id="MF_00382"/>
    </source>
</evidence>
<evidence type="ECO:0000305" key="2"/>
<proteinExistence type="inferred from homology"/>
<gene>
    <name evidence="1" type="primary">rplT</name>
    <name type="ordered locus">MXAN_3593</name>
</gene>
<name>RL20_MYXXD</name>